<organism>
    <name type="scientific">Escherichia coli O157:H7</name>
    <dbReference type="NCBI Taxonomy" id="83334"/>
    <lineage>
        <taxon>Bacteria</taxon>
        <taxon>Pseudomonadati</taxon>
        <taxon>Pseudomonadota</taxon>
        <taxon>Gammaproteobacteria</taxon>
        <taxon>Enterobacterales</taxon>
        <taxon>Enterobacteriaceae</taxon>
        <taxon>Escherichia</taxon>
    </lineage>
</organism>
<sequence>MHNDKDLSTWQTFRRLWPTIAPFKAGLIVAGVALILNAASDTFMLSLLKPLLDDGFGKTDRSVLVWMPLVVIGLMILRGITSYVSSYCISWVSGKVVMTMRRRLFGHMMGMPVSFFDKQSTGTLLSRITYDSEQVASSSSGALITVVREGASIIGLFIMMFYYSWQLSIILIVLAPIVSIAIRVVSKRFRNISKNMQNTMGQVTTSAEQMLKGHKEVLIFGGQEVETKRFDKVSNRMRLQGMKMVSASSISDPIIQLIASLALAFVLYAASFPSVMDSLTAGTITVVFSSMIALMRPLKSLTNVNAQFQRGMAACQTLFTILDSEQEKDEGKRVIERATGDVEFRNVTFTYPGRDVPALRNINLKIPAGKTVALVGRSGSGKSTIASLITRFYDIDEGEILMDGHDLREYTLASLRNQVALVSQNVHLFNDTVANNIAYARTEQYSREQIEEAARMAYAMDFINKMDNGLDTVIGENGVLLSGGQRQRIAIARALLRDSPILILDEATSALDTESERAIQAALDELQKNRTSLVIAHRLSTIEKADEIVVVEDGVIVERGTHNDLLEHRGVYAQLHKMQFGQ</sequence>
<protein>
    <recommendedName>
        <fullName evidence="1">ATP-dependent lipid A-core flippase</fullName>
        <ecNumber evidence="1">7.5.2.6</ecNumber>
    </recommendedName>
    <alternativeName>
        <fullName evidence="1">Lipid A export ATP-binding/permease protein MsbA</fullName>
    </alternativeName>
</protein>
<keyword id="KW-0067">ATP-binding</keyword>
<keyword id="KW-0997">Cell inner membrane</keyword>
<keyword id="KW-1003">Cell membrane</keyword>
<keyword id="KW-0445">Lipid transport</keyword>
<keyword id="KW-0472">Membrane</keyword>
<keyword id="KW-0547">Nucleotide-binding</keyword>
<keyword id="KW-1185">Reference proteome</keyword>
<keyword id="KW-1278">Translocase</keyword>
<keyword id="KW-0812">Transmembrane</keyword>
<keyword id="KW-1133">Transmembrane helix</keyword>
<keyword id="KW-0813">Transport</keyword>
<feature type="chain" id="PRO_0000092579" description="ATP-dependent lipid A-core flippase">
    <location>
        <begin position="1"/>
        <end position="582"/>
    </location>
</feature>
<feature type="transmembrane region" description="Helical" evidence="1">
    <location>
        <begin position="16"/>
        <end position="36"/>
    </location>
</feature>
<feature type="transmembrane region" description="Helical" evidence="1">
    <location>
        <begin position="63"/>
        <end position="83"/>
    </location>
</feature>
<feature type="transmembrane region" description="Helical" evidence="1">
    <location>
        <begin position="153"/>
        <end position="173"/>
    </location>
</feature>
<feature type="transmembrane region" description="Helical" evidence="1">
    <location>
        <begin position="253"/>
        <end position="273"/>
    </location>
</feature>
<feature type="transmembrane region" description="Helical" evidence="1">
    <location>
        <begin position="275"/>
        <end position="295"/>
    </location>
</feature>
<feature type="domain" description="ABC transmembrane type-1" evidence="1">
    <location>
        <begin position="28"/>
        <end position="310"/>
    </location>
</feature>
<feature type="domain" description="ABC transporter" evidence="1">
    <location>
        <begin position="342"/>
        <end position="578"/>
    </location>
</feature>
<feature type="binding site" evidence="1">
    <location>
        <begin position="376"/>
        <end position="383"/>
    </location>
    <ligand>
        <name>ATP</name>
        <dbReference type="ChEBI" id="CHEBI:30616"/>
    </ligand>
</feature>
<dbReference type="EC" id="7.5.2.6" evidence="1"/>
<dbReference type="EMBL" id="AE005174">
    <property type="protein sequence ID" value="AAG55399.1"/>
    <property type="molecule type" value="Genomic_DNA"/>
</dbReference>
<dbReference type="EMBL" id="BA000007">
    <property type="protein sequence ID" value="BAB34420.1"/>
    <property type="molecule type" value="Genomic_DNA"/>
</dbReference>
<dbReference type="RefSeq" id="NP_309024.1">
    <property type="nucleotide sequence ID" value="NC_002695.1"/>
</dbReference>
<dbReference type="RefSeq" id="WP_000551270.1">
    <property type="nucleotide sequence ID" value="NZ_VOAI01000006.1"/>
</dbReference>
<dbReference type="EMDB" id="EMD-8467"/>
<dbReference type="EMDB" id="EMD-8469"/>
<dbReference type="SMR" id="P60753"/>
<dbReference type="STRING" id="155864.Z1260"/>
<dbReference type="GeneID" id="75205316"/>
<dbReference type="GeneID" id="917742"/>
<dbReference type="KEGG" id="ece:Z1260"/>
<dbReference type="KEGG" id="ecs:ECs_0997"/>
<dbReference type="PATRIC" id="fig|386585.9.peg.1117"/>
<dbReference type="eggNOG" id="COG1132">
    <property type="taxonomic scope" value="Bacteria"/>
</dbReference>
<dbReference type="HOGENOM" id="CLU_000604_84_3_6"/>
<dbReference type="OMA" id="MYTGHTL"/>
<dbReference type="Proteomes" id="UP000000558">
    <property type="component" value="Chromosome"/>
</dbReference>
<dbReference type="Proteomes" id="UP000002519">
    <property type="component" value="Chromosome"/>
</dbReference>
<dbReference type="GO" id="GO:0005886">
    <property type="term" value="C:plasma membrane"/>
    <property type="evidence" value="ECO:0007669"/>
    <property type="project" value="UniProtKB-SubCell"/>
</dbReference>
<dbReference type="GO" id="GO:0015421">
    <property type="term" value="F:ABC-type oligopeptide transporter activity"/>
    <property type="evidence" value="ECO:0007669"/>
    <property type="project" value="TreeGrafter"/>
</dbReference>
<dbReference type="GO" id="GO:0005524">
    <property type="term" value="F:ATP binding"/>
    <property type="evidence" value="ECO:0007669"/>
    <property type="project" value="UniProtKB-KW"/>
</dbReference>
<dbReference type="GO" id="GO:0016887">
    <property type="term" value="F:ATP hydrolysis activity"/>
    <property type="evidence" value="ECO:0007669"/>
    <property type="project" value="InterPro"/>
</dbReference>
<dbReference type="GO" id="GO:0034040">
    <property type="term" value="F:ATPase-coupled lipid transmembrane transporter activity"/>
    <property type="evidence" value="ECO:0007669"/>
    <property type="project" value="InterPro"/>
</dbReference>
<dbReference type="GO" id="GO:0042802">
    <property type="term" value="F:identical protein binding"/>
    <property type="evidence" value="ECO:0000353"/>
    <property type="project" value="IntAct"/>
</dbReference>
<dbReference type="CDD" id="cd18552">
    <property type="entry name" value="ABC_6TM_MsbA_like"/>
    <property type="match status" value="1"/>
</dbReference>
<dbReference type="CDD" id="cd03251">
    <property type="entry name" value="ABCC_MsbA"/>
    <property type="match status" value="1"/>
</dbReference>
<dbReference type="FunFam" id="1.20.1560.10:FF:000008">
    <property type="entry name" value="Lipid A export ATP-binding/permease protein MsbA"/>
    <property type="match status" value="1"/>
</dbReference>
<dbReference type="FunFam" id="3.40.50.300:FF:000140">
    <property type="entry name" value="Lipid A export ATP-binding/permease protein MsbA"/>
    <property type="match status" value="1"/>
</dbReference>
<dbReference type="Gene3D" id="1.20.1560.10">
    <property type="entry name" value="ABC transporter type 1, transmembrane domain"/>
    <property type="match status" value="1"/>
</dbReference>
<dbReference type="Gene3D" id="3.40.50.300">
    <property type="entry name" value="P-loop containing nucleotide triphosphate hydrolases"/>
    <property type="match status" value="1"/>
</dbReference>
<dbReference type="InterPro" id="IPR003593">
    <property type="entry name" value="AAA+_ATPase"/>
</dbReference>
<dbReference type="InterPro" id="IPR011527">
    <property type="entry name" value="ABC1_TM_dom"/>
</dbReference>
<dbReference type="InterPro" id="IPR036640">
    <property type="entry name" value="ABC1_TM_sf"/>
</dbReference>
<dbReference type="InterPro" id="IPR003439">
    <property type="entry name" value="ABC_transporter-like_ATP-bd"/>
</dbReference>
<dbReference type="InterPro" id="IPR017871">
    <property type="entry name" value="ABC_transporter-like_CS"/>
</dbReference>
<dbReference type="InterPro" id="IPR011917">
    <property type="entry name" value="ABC_transpr_lipidA"/>
</dbReference>
<dbReference type="InterPro" id="IPR027417">
    <property type="entry name" value="P-loop_NTPase"/>
</dbReference>
<dbReference type="InterPro" id="IPR039421">
    <property type="entry name" value="Type_1_exporter"/>
</dbReference>
<dbReference type="NCBIfam" id="TIGR02203">
    <property type="entry name" value="MsbA_lipidA"/>
    <property type="match status" value="1"/>
</dbReference>
<dbReference type="NCBIfam" id="NF008381">
    <property type="entry name" value="PRK11176.1"/>
    <property type="match status" value="1"/>
</dbReference>
<dbReference type="PANTHER" id="PTHR43394:SF1">
    <property type="entry name" value="ATP-BINDING CASSETTE SUB-FAMILY B MEMBER 10, MITOCHONDRIAL"/>
    <property type="match status" value="1"/>
</dbReference>
<dbReference type="PANTHER" id="PTHR43394">
    <property type="entry name" value="ATP-DEPENDENT PERMEASE MDL1, MITOCHONDRIAL"/>
    <property type="match status" value="1"/>
</dbReference>
<dbReference type="Pfam" id="PF00664">
    <property type="entry name" value="ABC_membrane"/>
    <property type="match status" value="1"/>
</dbReference>
<dbReference type="Pfam" id="PF00005">
    <property type="entry name" value="ABC_tran"/>
    <property type="match status" value="1"/>
</dbReference>
<dbReference type="SMART" id="SM00382">
    <property type="entry name" value="AAA"/>
    <property type="match status" value="1"/>
</dbReference>
<dbReference type="SUPFAM" id="SSF90123">
    <property type="entry name" value="ABC transporter transmembrane region"/>
    <property type="match status" value="1"/>
</dbReference>
<dbReference type="SUPFAM" id="SSF52540">
    <property type="entry name" value="P-loop containing nucleoside triphosphate hydrolases"/>
    <property type="match status" value="1"/>
</dbReference>
<dbReference type="PROSITE" id="PS50929">
    <property type="entry name" value="ABC_TM1F"/>
    <property type="match status" value="1"/>
</dbReference>
<dbReference type="PROSITE" id="PS00211">
    <property type="entry name" value="ABC_TRANSPORTER_1"/>
    <property type="match status" value="1"/>
</dbReference>
<dbReference type="PROSITE" id="PS50893">
    <property type="entry name" value="ABC_TRANSPORTER_2"/>
    <property type="match status" value="1"/>
</dbReference>
<dbReference type="PROSITE" id="PS51239">
    <property type="entry name" value="MSBA"/>
    <property type="match status" value="1"/>
</dbReference>
<evidence type="ECO:0000255" key="1">
    <source>
        <dbReference type="HAMAP-Rule" id="MF_01703"/>
    </source>
</evidence>
<reference key="1">
    <citation type="journal article" date="2001" name="Nature">
        <title>Genome sequence of enterohaemorrhagic Escherichia coli O157:H7.</title>
        <authorList>
            <person name="Perna N.T."/>
            <person name="Plunkett G. III"/>
            <person name="Burland V."/>
            <person name="Mau B."/>
            <person name="Glasner J.D."/>
            <person name="Rose D.J."/>
            <person name="Mayhew G.F."/>
            <person name="Evans P.S."/>
            <person name="Gregor J."/>
            <person name="Kirkpatrick H.A."/>
            <person name="Posfai G."/>
            <person name="Hackett J."/>
            <person name="Klink S."/>
            <person name="Boutin A."/>
            <person name="Shao Y."/>
            <person name="Miller L."/>
            <person name="Grotbeck E.J."/>
            <person name="Davis N.W."/>
            <person name="Lim A."/>
            <person name="Dimalanta E.T."/>
            <person name="Potamousis K."/>
            <person name="Apodaca J."/>
            <person name="Anantharaman T.S."/>
            <person name="Lin J."/>
            <person name="Yen G."/>
            <person name="Schwartz D.C."/>
            <person name="Welch R.A."/>
            <person name="Blattner F.R."/>
        </authorList>
    </citation>
    <scope>NUCLEOTIDE SEQUENCE [LARGE SCALE GENOMIC DNA]</scope>
    <source>
        <strain>O157:H7 / EDL933 / ATCC 700927 / EHEC</strain>
    </source>
</reference>
<reference key="2">
    <citation type="journal article" date="2001" name="DNA Res.">
        <title>Complete genome sequence of enterohemorrhagic Escherichia coli O157:H7 and genomic comparison with a laboratory strain K-12.</title>
        <authorList>
            <person name="Hayashi T."/>
            <person name="Makino K."/>
            <person name="Ohnishi M."/>
            <person name="Kurokawa K."/>
            <person name="Ishii K."/>
            <person name="Yokoyama K."/>
            <person name="Han C.-G."/>
            <person name="Ohtsubo E."/>
            <person name="Nakayama K."/>
            <person name="Murata T."/>
            <person name="Tanaka M."/>
            <person name="Tobe T."/>
            <person name="Iida T."/>
            <person name="Takami H."/>
            <person name="Honda T."/>
            <person name="Sasakawa C."/>
            <person name="Ogasawara N."/>
            <person name="Yasunaga T."/>
            <person name="Kuhara S."/>
            <person name="Shiba T."/>
            <person name="Hattori M."/>
            <person name="Shinagawa H."/>
        </authorList>
    </citation>
    <scope>NUCLEOTIDE SEQUENCE [LARGE SCALE GENOMIC DNA]</scope>
    <source>
        <strain>O157:H7 / Sakai / RIMD 0509952 / EHEC</strain>
    </source>
</reference>
<gene>
    <name evidence="1" type="primary">msbA</name>
    <name type="ordered locus">Z1260</name>
    <name type="ordered locus">ECs0997</name>
</gene>
<comment type="function">
    <text evidence="1">Involved in lipopolysaccharide (LPS) biosynthesis. Translocates lipid A-core from the inner to the outer leaflet of the inner membrane. Transmembrane domains (TMD) form a pore in the inner membrane and the ATP-binding domain (NBD) is responsible for energy generation.</text>
</comment>
<comment type="catalytic activity">
    <reaction evidence="1">
        <text>ATP + H2O + lipid A-core oligosaccharideSide 1 = ADP + phosphate + lipid A-core oligosaccharideSide 2.</text>
        <dbReference type="EC" id="7.5.2.6"/>
    </reaction>
</comment>
<comment type="subunit">
    <text evidence="1">Homodimer.</text>
</comment>
<comment type="interaction">
    <interactant intactId="EBI-20627825">
        <id>P60753</id>
    </interactant>
    <interactant intactId="EBI-20627825">
        <id>P60753</id>
        <label>msbA</label>
    </interactant>
    <organismsDiffer>false</organismsDiffer>
    <experiments>2</experiments>
</comment>
<comment type="subcellular location">
    <subcellularLocation>
        <location evidence="1">Cell inner membrane</location>
        <topology evidence="1">Multi-pass membrane protein</topology>
    </subcellularLocation>
</comment>
<comment type="domain">
    <text evidence="1">In MsbA the ATP-binding domain (NBD) and the transmembrane domain (TMD) are fused.</text>
</comment>
<comment type="similarity">
    <text evidence="1">Belongs to the ABC transporter superfamily. Lipid exporter (TC 3.A.1.106) family.</text>
</comment>
<accession>P60753</accession>
<accession>P27299</accession>
<name>MSBA_ECO57</name>
<proteinExistence type="evidence at protein level"/>